<dbReference type="PIR" id="A01681">
    <property type="entry name" value="V6EP82"/>
</dbReference>
<dbReference type="SMR" id="P01411"/>
<dbReference type="GO" id="GO:0005576">
    <property type="term" value="C:extracellular region"/>
    <property type="evidence" value="ECO:0007669"/>
    <property type="project" value="UniProtKB-SubCell"/>
</dbReference>
<dbReference type="GO" id="GO:0090729">
    <property type="term" value="F:toxin activity"/>
    <property type="evidence" value="ECO:0007669"/>
    <property type="project" value="UniProtKB-KW"/>
</dbReference>
<dbReference type="CDD" id="cd00206">
    <property type="entry name" value="TFP_snake_toxin"/>
    <property type="match status" value="1"/>
</dbReference>
<dbReference type="Gene3D" id="2.10.60.10">
    <property type="entry name" value="CD59"/>
    <property type="match status" value="1"/>
</dbReference>
<dbReference type="InterPro" id="IPR003571">
    <property type="entry name" value="Snake_3FTx"/>
</dbReference>
<dbReference type="InterPro" id="IPR045860">
    <property type="entry name" value="Snake_toxin-like_sf"/>
</dbReference>
<dbReference type="InterPro" id="IPR018354">
    <property type="entry name" value="Snake_toxin_con_site"/>
</dbReference>
<dbReference type="InterPro" id="IPR054131">
    <property type="entry name" value="Toxin_cobra-type"/>
</dbReference>
<dbReference type="Pfam" id="PF21947">
    <property type="entry name" value="Toxin_cobra-type"/>
    <property type="match status" value="1"/>
</dbReference>
<dbReference type="SUPFAM" id="SSF57302">
    <property type="entry name" value="Snake toxin-like"/>
    <property type="match status" value="1"/>
</dbReference>
<dbReference type="PROSITE" id="PS00272">
    <property type="entry name" value="SNAKE_TOXIN"/>
    <property type="match status" value="1"/>
</dbReference>
<name>3SIY2_DENAN</name>
<feature type="chain" id="PRO_0000093620" description="Synergistic-type venom protein C8S2, chain 2" evidence="2">
    <location>
        <begin position="1"/>
        <end position="62"/>
    </location>
</feature>
<feature type="disulfide bond" evidence="1">
    <location>
        <begin position="3"/>
        <end position="24"/>
    </location>
</feature>
<feature type="disulfide bond" evidence="1">
    <location>
        <begin position="17"/>
        <end position="42"/>
    </location>
</feature>
<feature type="disulfide bond" evidence="1">
    <location>
        <begin position="46"/>
        <end position="57"/>
    </location>
</feature>
<feature type="disulfide bond" description="Interchain" evidence="1">
    <location>
        <position position="54"/>
    </location>
</feature>
<comment type="function">
    <text evidence="2">This protein shows a synergetic toxic effect in that it enhances the toxicity of other toxins.</text>
</comment>
<comment type="subunit">
    <text evidence="1">Heterodimer of C8S2 chain 1 (AC P01410) and chain 2; disulfide-linked.</text>
</comment>
<comment type="subcellular location">
    <subcellularLocation>
        <location evidence="2">Secreted</location>
    </subcellularLocation>
</comment>
<comment type="tissue specificity">
    <text evidence="4">Expressed by the venom gland.</text>
</comment>
<comment type="miscellaneous">
    <text evidence="3">Is classified as a P-type cytotoxin, since a proline residue stands at position 33 (Pro-31 in standard classification).</text>
</comment>
<comment type="similarity">
    <text evidence="3">Belongs to the three-finger toxin family. Short-chain subfamily. Aminergic toxin sub-subfamily.</text>
</comment>
<protein>
    <recommendedName>
        <fullName>Synergistic-type venom protein C8S2, chain 2</fullName>
    </recommendedName>
</protein>
<sequence length="62" mass="6582">LTCVTGKSIGGISTEECAAGQKRCNKKWTKMGPKLYDVSRGCAATCPTADEYGCVKCCNTDK</sequence>
<accession>P01411</accession>
<organism>
    <name type="scientific">Dendroaspis angusticeps</name>
    <name type="common">Eastern green mamba</name>
    <name type="synonym">Naja angusticeps</name>
    <dbReference type="NCBI Taxonomy" id="8618"/>
    <lineage>
        <taxon>Eukaryota</taxon>
        <taxon>Metazoa</taxon>
        <taxon>Chordata</taxon>
        <taxon>Craniata</taxon>
        <taxon>Vertebrata</taxon>
        <taxon>Euteleostomi</taxon>
        <taxon>Lepidosauria</taxon>
        <taxon>Squamata</taxon>
        <taxon>Bifurcata</taxon>
        <taxon>Unidentata</taxon>
        <taxon>Episquamata</taxon>
        <taxon>Toxicofera</taxon>
        <taxon>Serpentes</taxon>
        <taxon>Colubroidea</taxon>
        <taxon>Elapidae</taxon>
        <taxon>Elapinae</taxon>
        <taxon>Dendroaspis</taxon>
    </lineage>
</organism>
<proteinExistence type="evidence at protein level"/>
<evidence type="ECO:0000250" key="1">
    <source>
        <dbReference type="UniProtKB" id="P0DQP2"/>
    </source>
</evidence>
<evidence type="ECO:0000269" key="2">
    <source>
    </source>
</evidence>
<evidence type="ECO:0000305" key="3"/>
<evidence type="ECO:0000305" key="4">
    <source>
    </source>
</evidence>
<reference key="1">
    <citation type="journal article" date="1979" name="Hoppe-Seyler's Z. Physiol. Chem.">
        <title>Snake venom. The amino-acid sequence of the subunits of two reduced and S-carboxymethylated proteins (C8S2 and C9S3) from Dendroaspis angusticeps venom.</title>
        <authorList>
            <person name="Joubert F.J."/>
            <person name="Viljoen C.C."/>
        </authorList>
    </citation>
    <scope>PROTEIN SEQUENCE</scope>
    <scope>FUNCTION</scope>
    <scope>SUBCELLULAR LOCATION</scope>
    <source>
        <tissue>Venom</tissue>
    </source>
</reference>
<keyword id="KW-0903">Direct protein sequencing</keyword>
<keyword id="KW-1015">Disulfide bond</keyword>
<keyword id="KW-0964">Secreted</keyword>
<keyword id="KW-0800">Toxin</keyword>